<gene>
    <name evidence="1" type="primary">argB</name>
    <name type="ordered locus">Sputcn32_3716</name>
</gene>
<organism>
    <name type="scientific">Shewanella putrefaciens (strain CN-32 / ATCC BAA-453)</name>
    <dbReference type="NCBI Taxonomy" id="319224"/>
    <lineage>
        <taxon>Bacteria</taxon>
        <taxon>Pseudomonadati</taxon>
        <taxon>Pseudomonadota</taxon>
        <taxon>Gammaproteobacteria</taxon>
        <taxon>Alteromonadales</taxon>
        <taxon>Shewanellaceae</taxon>
        <taxon>Shewanella</taxon>
    </lineage>
</organism>
<name>ARGB_SHEPC</name>
<evidence type="ECO:0000255" key="1">
    <source>
        <dbReference type="HAMAP-Rule" id="MF_00082"/>
    </source>
</evidence>
<comment type="function">
    <text evidence="1">Catalyzes the ATP-dependent phosphorylation of N-acetyl-L-glutamate.</text>
</comment>
<comment type="catalytic activity">
    <reaction evidence="1">
        <text>N-acetyl-L-glutamate + ATP = N-acetyl-L-glutamyl 5-phosphate + ADP</text>
        <dbReference type="Rhea" id="RHEA:14629"/>
        <dbReference type="ChEBI" id="CHEBI:30616"/>
        <dbReference type="ChEBI" id="CHEBI:44337"/>
        <dbReference type="ChEBI" id="CHEBI:57936"/>
        <dbReference type="ChEBI" id="CHEBI:456216"/>
        <dbReference type="EC" id="2.7.2.8"/>
    </reaction>
</comment>
<comment type="pathway">
    <text evidence="1">Amino-acid biosynthesis; L-arginine biosynthesis; N(2)-acetyl-L-ornithine from L-glutamate: step 2/4.</text>
</comment>
<comment type="subcellular location">
    <subcellularLocation>
        <location evidence="1">Cytoplasm</location>
    </subcellularLocation>
</comment>
<comment type="similarity">
    <text evidence="1">Belongs to the acetylglutamate kinase family. ArgB subfamily.</text>
</comment>
<dbReference type="EC" id="2.7.2.8" evidence="1"/>
<dbReference type="EMBL" id="CP000681">
    <property type="protein sequence ID" value="ABP77424.1"/>
    <property type="molecule type" value="Genomic_DNA"/>
</dbReference>
<dbReference type="SMR" id="A4YBU1"/>
<dbReference type="STRING" id="319224.Sputcn32_3716"/>
<dbReference type="KEGG" id="spc:Sputcn32_3716"/>
<dbReference type="eggNOG" id="COG0548">
    <property type="taxonomic scope" value="Bacteria"/>
</dbReference>
<dbReference type="HOGENOM" id="CLU_053680_1_1_6"/>
<dbReference type="UniPathway" id="UPA00068">
    <property type="reaction ID" value="UER00107"/>
</dbReference>
<dbReference type="GO" id="GO:0005737">
    <property type="term" value="C:cytoplasm"/>
    <property type="evidence" value="ECO:0007669"/>
    <property type="project" value="UniProtKB-SubCell"/>
</dbReference>
<dbReference type="GO" id="GO:0003991">
    <property type="term" value="F:acetylglutamate kinase activity"/>
    <property type="evidence" value="ECO:0007669"/>
    <property type="project" value="UniProtKB-UniRule"/>
</dbReference>
<dbReference type="GO" id="GO:0005524">
    <property type="term" value="F:ATP binding"/>
    <property type="evidence" value="ECO:0007669"/>
    <property type="project" value="UniProtKB-UniRule"/>
</dbReference>
<dbReference type="GO" id="GO:0042450">
    <property type="term" value="P:arginine biosynthetic process via ornithine"/>
    <property type="evidence" value="ECO:0007669"/>
    <property type="project" value="UniProtKB-UniRule"/>
</dbReference>
<dbReference type="GO" id="GO:0006526">
    <property type="term" value="P:L-arginine biosynthetic process"/>
    <property type="evidence" value="ECO:0007669"/>
    <property type="project" value="UniProtKB-UniPathway"/>
</dbReference>
<dbReference type="FunFam" id="3.40.1160.10:FF:000008">
    <property type="entry name" value="Acetylglutamate kinase"/>
    <property type="match status" value="1"/>
</dbReference>
<dbReference type="Gene3D" id="3.40.1160.10">
    <property type="entry name" value="Acetylglutamate kinase-like"/>
    <property type="match status" value="1"/>
</dbReference>
<dbReference type="HAMAP" id="MF_00082">
    <property type="entry name" value="ArgB"/>
    <property type="match status" value="1"/>
</dbReference>
<dbReference type="InterPro" id="IPR036393">
    <property type="entry name" value="AceGlu_kinase-like_sf"/>
</dbReference>
<dbReference type="InterPro" id="IPR004662">
    <property type="entry name" value="AcgluKinase_fam"/>
</dbReference>
<dbReference type="InterPro" id="IPR037528">
    <property type="entry name" value="ArgB"/>
</dbReference>
<dbReference type="InterPro" id="IPR001048">
    <property type="entry name" value="Asp/Glu/Uridylate_kinase"/>
</dbReference>
<dbReference type="NCBIfam" id="TIGR00761">
    <property type="entry name" value="argB"/>
    <property type="match status" value="1"/>
</dbReference>
<dbReference type="PANTHER" id="PTHR23342">
    <property type="entry name" value="N-ACETYLGLUTAMATE SYNTHASE"/>
    <property type="match status" value="1"/>
</dbReference>
<dbReference type="PANTHER" id="PTHR23342:SF0">
    <property type="entry name" value="N-ACETYLGLUTAMATE SYNTHASE, MITOCHONDRIAL"/>
    <property type="match status" value="1"/>
</dbReference>
<dbReference type="Pfam" id="PF00696">
    <property type="entry name" value="AA_kinase"/>
    <property type="match status" value="1"/>
</dbReference>
<dbReference type="PIRSF" id="PIRSF000728">
    <property type="entry name" value="NAGK"/>
    <property type="match status" value="1"/>
</dbReference>
<dbReference type="SUPFAM" id="SSF53633">
    <property type="entry name" value="Carbamate kinase-like"/>
    <property type="match status" value="1"/>
</dbReference>
<accession>A4YBU1</accession>
<proteinExistence type="inferred from homology"/>
<feature type="chain" id="PRO_1000010543" description="Acetylglutamate kinase">
    <location>
        <begin position="1"/>
        <end position="260"/>
    </location>
</feature>
<feature type="binding site" evidence="1">
    <location>
        <begin position="46"/>
        <end position="47"/>
    </location>
    <ligand>
        <name>substrate</name>
    </ligand>
</feature>
<feature type="binding site" evidence="1">
    <location>
        <position position="68"/>
    </location>
    <ligand>
        <name>substrate</name>
    </ligand>
</feature>
<feature type="binding site" evidence="1">
    <location>
        <position position="160"/>
    </location>
    <ligand>
        <name>substrate</name>
    </ligand>
</feature>
<feature type="site" description="Transition state stabilizer" evidence="1">
    <location>
        <position position="11"/>
    </location>
</feature>
<feature type="site" description="Transition state stabilizer" evidence="1">
    <location>
        <position position="219"/>
    </location>
</feature>
<protein>
    <recommendedName>
        <fullName evidence="1">Acetylglutamate kinase</fullName>
        <ecNumber evidence="1">2.7.2.8</ecNumber>
    </recommendedName>
    <alternativeName>
        <fullName evidence="1">N-acetyl-L-glutamate 5-phosphotransferase</fullName>
    </alternativeName>
    <alternativeName>
        <fullName evidence="1">NAG kinase</fullName>
        <shortName evidence="1">NAGK</shortName>
    </alternativeName>
</protein>
<reference key="1">
    <citation type="submission" date="2007-04" db="EMBL/GenBank/DDBJ databases">
        <title>Complete sequence of Shewanella putrefaciens CN-32.</title>
        <authorList>
            <consortium name="US DOE Joint Genome Institute"/>
            <person name="Copeland A."/>
            <person name="Lucas S."/>
            <person name="Lapidus A."/>
            <person name="Barry K."/>
            <person name="Detter J.C."/>
            <person name="Glavina del Rio T."/>
            <person name="Hammon N."/>
            <person name="Israni S."/>
            <person name="Dalin E."/>
            <person name="Tice H."/>
            <person name="Pitluck S."/>
            <person name="Chain P."/>
            <person name="Malfatti S."/>
            <person name="Shin M."/>
            <person name="Vergez L."/>
            <person name="Schmutz J."/>
            <person name="Larimer F."/>
            <person name="Land M."/>
            <person name="Hauser L."/>
            <person name="Kyrpides N."/>
            <person name="Mikhailova N."/>
            <person name="Romine M.F."/>
            <person name="Fredrickson J."/>
            <person name="Tiedje J."/>
            <person name="Richardson P."/>
        </authorList>
    </citation>
    <scope>NUCLEOTIDE SEQUENCE [LARGE SCALE GENOMIC DNA]</scope>
    <source>
        <strain>CN-32 / ATCC BAA-453</strain>
    </source>
</reference>
<keyword id="KW-0028">Amino-acid biosynthesis</keyword>
<keyword id="KW-0055">Arginine biosynthesis</keyword>
<keyword id="KW-0067">ATP-binding</keyword>
<keyword id="KW-0963">Cytoplasm</keyword>
<keyword id="KW-0418">Kinase</keyword>
<keyword id="KW-0547">Nucleotide-binding</keyword>
<keyword id="KW-0808">Transferase</keyword>
<sequence length="260" mass="26933">MSTNNSVLVLKVGGALLQCEMGMARLMDTAAAMLANGQKVLMVHGGGCLVDEQLAANGMETVKLEGLRVTPPEQMPIIAGALAGTSNKILQGAATKAGIVSVGMSLADGNTVSAKIKDERLGLVGEVTPKDGTYLKFILEQGWMPICSSIAMMDDGQMLNVNADQAATALAKLVGGKLVLLSDVSGVLDGKGQLIHSLNGKQIADLVKQGVIEKGMKVKVEAALEVAQWMGQAVQVASWRDASQLIALAKGEAVGTQIQP</sequence>